<keyword id="KW-0256">Endoplasmic reticulum</keyword>
<keyword id="KW-0276">Fatty acid metabolism</keyword>
<keyword id="KW-0349">Heme</keyword>
<keyword id="KW-0408">Iron</keyword>
<keyword id="KW-0443">Lipid metabolism</keyword>
<keyword id="KW-0456">Lyase</keyword>
<keyword id="KW-0472">Membrane</keyword>
<keyword id="KW-0479">Metal-binding</keyword>
<keyword id="KW-0492">Microsome</keyword>
<keyword id="KW-0496">Mitochondrion</keyword>
<keyword id="KW-0503">Monooxygenase</keyword>
<keyword id="KW-0560">Oxidoreductase</keyword>
<keyword id="KW-1185">Reference proteome</keyword>
<keyword id="KW-0753">Steroid metabolism</keyword>
<comment type="function">
    <text evidence="2 3 4 5 6 8 9">A cytochrome P450 monooxygenase involved in the metabolism of various endogenous substrates, including fatty acids, steroid hormones and vitamins (By similarity). Mechanistically, uses molecular oxygen inserting one oxygen atom into a substrate, and reducing the second into a water molecule, with two electrons provided by NADPH via cytochrome P450 reductase (NADPH--hemoprotein reductase) (By similarity). Exhibits catalytic activity for the formation of hydroxyestrogens from 17beta-estradiol (E2), namely 2- and 4-hydroxy E2 (PubMed:23821647). Metabolizes testosterone and progesterone to B or D ring hydroxylated metabolites (By similarity). May act as a major enzyme for all-trans retinoic acid biosynthesis in extrahepatic tissues. Catalyzes two successive oxidative transformation of all-trans retinol to all-trans retinal and then to the active form all-trans retinoic acid (PubMed:15258110). Catalyzes the epoxidation of double bonds of certain PUFA. Converts arachidonic acid toward epoxyeicosatrienoic acid (EpETrE) regioisomers, 8,9-, 11,12-, and 14,15- EpETrE, that function as lipid mediators in the vascular system (PubMed:15258110). Additionally, displays dehydratase activity toward oxygenated eicosanoids hydroperoxyeicosatetraenoates (HpETEs). This activity is independent of cytochrome P450 reductase, NADPH, and O2 (By similarity). Also involved in the oxidative metabolism of xenobiotics, particularly converting polycyclic aromatic hydrocarbons and heterocyclic aryl amines procarcinogens to DNA-damaging products (By similarity). Plays an important role in retinal vascular development. Under ambient/hyperoxic O2 conditions, promotes angiogenesis and capillary morphogenesis of retinal endothelial cells and pericytes, likely by metabolizing the oxygenated products symptomatic of oxidative stress (PubMed:19005183, PubMed:20032512, PubMed:23568032). Also, contributes to oxidative homeostasis and ultrastructural organization and function of trabecular meshwork tissue through modulation of POSTN expression (PubMed:23979599).</text>
</comment>
<comment type="catalytic activity">
    <reaction evidence="8">
        <text>an organic molecule + reduced [NADPH--hemoprotein reductase] + O2 = an alcohol + oxidized [NADPH--hemoprotein reductase] + H2O + H(+)</text>
        <dbReference type="Rhea" id="RHEA:17149"/>
        <dbReference type="Rhea" id="RHEA-COMP:11964"/>
        <dbReference type="Rhea" id="RHEA-COMP:11965"/>
        <dbReference type="ChEBI" id="CHEBI:15377"/>
        <dbReference type="ChEBI" id="CHEBI:15378"/>
        <dbReference type="ChEBI" id="CHEBI:15379"/>
        <dbReference type="ChEBI" id="CHEBI:30879"/>
        <dbReference type="ChEBI" id="CHEBI:57618"/>
        <dbReference type="ChEBI" id="CHEBI:58210"/>
        <dbReference type="ChEBI" id="CHEBI:142491"/>
        <dbReference type="EC" id="1.14.14.1"/>
    </reaction>
    <physiologicalReaction direction="left-to-right" evidence="14">
        <dbReference type="Rhea" id="RHEA:17150"/>
    </physiologicalReaction>
</comment>
<comment type="catalytic activity">
    <reaction evidence="8">
        <text>17beta-estradiol + reduced [NADPH--hemoprotein reductase] + O2 = 2-hydroxy-17beta-estradiol + oxidized [NADPH--hemoprotein reductase] + H2O + H(+)</text>
        <dbReference type="Rhea" id="RHEA:47212"/>
        <dbReference type="Rhea" id="RHEA-COMP:11964"/>
        <dbReference type="Rhea" id="RHEA-COMP:11965"/>
        <dbReference type="ChEBI" id="CHEBI:15377"/>
        <dbReference type="ChEBI" id="CHEBI:15378"/>
        <dbReference type="ChEBI" id="CHEBI:15379"/>
        <dbReference type="ChEBI" id="CHEBI:16469"/>
        <dbReference type="ChEBI" id="CHEBI:28744"/>
        <dbReference type="ChEBI" id="CHEBI:57618"/>
        <dbReference type="ChEBI" id="CHEBI:58210"/>
    </reaction>
    <physiologicalReaction direction="left-to-right" evidence="14">
        <dbReference type="Rhea" id="RHEA:47213"/>
    </physiologicalReaction>
</comment>
<comment type="catalytic activity">
    <reaction evidence="8">
        <text>17beta-estradiol + reduced [NADPH--hemoprotein reductase] + O2 = 4-hydroxy-17beta-estradiol + oxidized [NADPH--hemoprotein reductase] + H2O + H(+)</text>
        <dbReference type="Rhea" id="RHEA:47280"/>
        <dbReference type="Rhea" id="RHEA-COMP:11964"/>
        <dbReference type="Rhea" id="RHEA-COMP:11965"/>
        <dbReference type="ChEBI" id="CHEBI:15377"/>
        <dbReference type="ChEBI" id="CHEBI:15378"/>
        <dbReference type="ChEBI" id="CHEBI:15379"/>
        <dbReference type="ChEBI" id="CHEBI:16469"/>
        <dbReference type="ChEBI" id="CHEBI:57618"/>
        <dbReference type="ChEBI" id="CHEBI:58210"/>
        <dbReference type="ChEBI" id="CHEBI:62845"/>
    </reaction>
    <physiologicalReaction direction="left-to-right" evidence="14">
        <dbReference type="Rhea" id="RHEA:47281"/>
    </physiologicalReaction>
</comment>
<comment type="catalytic activity">
    <reaction evidence="2">
        <text>estrone + reduced [NADPH--hemoprotein reductase] + O2 = 2-hydroxyestrone + oxidized [NADPH--hemoprotein reductase] + H2O + H(+)</text>
        <dbReference type="Rhea" id="RHEA:47208"/>
        <dbReference type="Rhea" id="RHEA-COMP:11964"/>
        <dbReference type="Rhea" id="RHEA-COMP:11965"/>
        <dbReference type="ChEBI" id="CHEBI:1156"/>
        <dbReference type="ChEBI" id="CHEBI:15377"/>
        <dbReference type="ChEBI" id="CHEBI:15378"/>
        <dbReference type="ChEBI" id="CHEBI:15379"/>
        <dbReference type="ChEBI" id="CHEBI:17263"/>
        <dbReference type="ChEBI" id="CHEBI:57618"/>
        <dbReference type="ChEBI" id="CHEBI:58210"/>
    </reaction>
    <physiologicalReaction direction="left-to-right" evidence="2">
        <dbReference type="Rhea" id="RHEA:47209"/>
    </physiologicalReaction>
</comment>
<comment type="catalytic activity">
    <reaction evidence="2">
        <text>estrone + reduced [NADPH--hemoprotein reductase] + O2 = 4-hydroxyestrone + oxidized [NADPH--hemoprotein reductase] + H2O + H(+)</text>
        <dbReference type="Rhea" id="RHEA:47292"/>
        <dbReference type="Rhea" id="RHEA-COMP:11964"/>
        <dbReference type="Rhea" id="RHEA-COMP:11965"/>
        <dbReference type="ChEBI" id="CHEBI:15377"/>
        <dbReference type="ChEBI" id="CHEBI:15378"/>
        <dbReference type="ChEBI" id="CHEBI:15379"/>
        <dbReference type="ChEBI" id="CHEBI:17263"/>
        <dbReference type="ChEBI" id="CHEBI:57618"/>
        <dbReference type="ChEBI" id="CHEBI:58210"/>
        <dbReference type="ChEBI" id="CHEBI:87602"/>
    </reaction>
    <physiologicalReaction direction="left-to-right" evidence="2">
        <dbReference type="Rhea" id="RHEA:47293"/>
    </physiologicalReaction>
</comment>
<comment type="catalytic activity">
    <reaction evidence="2">
        <text>testosterone + reduced [NADPH--hemoprotein reductase] + O2 = 6beta,17beta-dihydroxyandrost-4-en-3-one + oxidized [NADPH--hemoprotein reductase] + H2O + H(+)</text>
        <dbReference type="Rhea" id="RHEA:46296"/>
        <dbReference type="Rhea" id="RHEA-COMP:11964"/>
        <dbReference type="Rhea" id="RHEA-COMP:11965"/>
        <dbReference type="ChEBI" id="CHEBI:15377"/>
        <dbReference type="ChEBI" id="CHEBI:15378"/>
        <dbReference type="ChEBI" id="CHEBI:15379"/>
        <dbReference type="ChEBI" id="CHEBI:17347"/>
        <dbReference type="ChEBI" id="CHEBI:34477"/>
        <dbReference type="ChEBI" id="CHEBI:57618"/>
        <dbReference type="ChEBI" id="CHEBI:58210"/>
    </reaction>
    <physiologicalReaction direction="left-to-right" evidence="2">
        <dbReference type="Rhea" id="RHEA:46297"/>
    </physiologicalReaction>
</comment>
<comment type="catalytic activity">
    <reaction evidence="2">
        <text>progesterone + reduced [NADPH--hemoprotein reductase] + O2 = 6beta-hydroxyprogesterone + oxidized [NADPH--hemoprotein reductase] + H2O + H(+)</text>
        <dbReference type="Rhea" id="RHEA:47252"/>
        <dbReference type="Rhea" id="RHEA-COMP:11964"/>
        <dbReference type="Rhea" id="RHEA-COMP:11965"/>
        <dbReference type="ChEBI" id="CHEBI:15377"/>
        <dbReference type="ChEBI" id="CHEBI:15378"/>
        <dbReference type="ChEBI" id="CHEBI:15379"/>
        <dbReference type="ChEBI" id="CHEBI:17026"/>
        <dbReference type="ChEBI" id="CHEBI:57618"/>
        <dbReference type="ChEBI" id="CHEBI:58210"/>
        <dbReference type="ChEBI" id="CHEBI:62117"/>
    </reaction>
    <physiologicalReaction direction="left-to-right" evidence="2">
        <dbReference type="Rhea" id="RHEA:47253"/>
    </physiologicalReaction>
</comment>
<comment type="catalytic activity">
    <reaction evidence="2">
        <text>progesterone + reduced [NADPH--hemoprotein reductase] + O2 = 16alpha-hydroxyprogesterone + oxidized [NADPH--hemoprotein reductase] + H2O + H(+)</text>
        <dbReference type="Rhea" id="RHEA:47260"/>
        <dbReference type="Rhea" id="RHEA-COMP:11964"/>
        <dbReference type="Rhea" id="RHEA-COMP:11965"/>
        <dbReference type="ChEBI" id="CHEBI:15377"/>
        <dbReference type="ChEBI" id="CHEBI:15378"/>
        <dbReference type="ChEBI" id="CHEBI:15379"/>
        <dbReference type="ChEBI" id="CHEBI:15826"/>
        <dbReference type="ChEBI" id="CHEBI:17026"/>
        <dbReference type="ChEBI" id="CHEBI:57618"/>
        <dbReference type="ChEBI" id="CHEBI:58210"/>
    </reaction>
    <physiologicalReaction direction="left-to-right" evidence="2">
        <dbReference type="Rhea" id="RHEA:47261"/>
    </physiologicalReaction>
</comment>
<comment type="catalytic activity">
    <reaction evidence="3">
        <text>all-trans-retinol + reduced [NADPH--hemoprotein reductase] + O2 = all-trans-retinal + oxidized [NADPH--hemoprotein reductase] + 2 H2O + H(+)</text>
        <dbReference type="Rhea" id="RHEA:42092"/>
        <dbReference type="Rhea" id="RHEA-COMP:11964"/>
        <dbReference type="Rhea" id="RHEA-COMP:11965"/>
        <dbReference type="ChEBI" id="CHEBI:15377"/>
        <dbReference type="ChEBI" id="CHEBI:15378"/>
        <dbReference type="ChEBI" id="CHEBI:15379"/>
        <dbReference type="ChEBI" id="CHEBI:17336"/>
        <dbReference type="ChEBI" id="CHEBI:17898"/>
        <dbReference type="ChEBI" id="CHEBI:57618"/>
        <dbReference type="ChEBI" id="CHEBI:58210"/>
    </reaction>
    <physiologicalReaction direction="left-to-right" evidence="13">
        <dbReference type="Rhea" id="RHEA:42093"/>
    </physiologicalReaction>
</comment>
<comment type="catalytic activity">
    <reaction evidence="3">
        <text>all-trans-retinal + reduced [NADPH--hemoprotein reductase] + O2 = all-trans-retinoate + oxidized [NADPH--hemoprotein reductase] + H2O + 2 H(+)</text>
        <dbReference type="Rhea" id="RHEA:42088"/>
        <dbReference type="Rhea" id="RHEA-COMP:11964"/>
        <dbReference type="Rhea" id="RHEA-COMP:11965"/>
        <dbReference type="ChEBI" id="CHEBI:15377"/>
        <dbReference type="ChEBI" id="CHEBI:15378"/>
        <dbReference type="ChEBI" id="CHEBI:15379"/>
        <dbReference type="ChEBI" id="CHEBI:17898"/>
        <dbReference type="ChEBI" id="CHEBI:35291"/>
        <dbReference type="ChEBI" id="CHEBI:57618"/>
        <dbReference type="ChEBI" id="CHEBI:58210"/>
    </reaction>
    <physiologicalReaction direction="left-to-right" evidence="13">
        <dbReference type="Rhea" id="RHEA:42089"/>
    </physiologicalReaction>
</comment>
<comment type="catalytic activity">
    <reaction evidence="2">
        <text>(5Z,8Z,11Z,14Z)-eicosatetraenoate + reduced [NADPH--hemoprotein reductase] + O2 = (8R,9S)-epoxy-(5Z,11Z,14Z)-eicosatrienoate + oxidized [NADPH--hemoprotein reductase] + H2O + H(+)</text>
        <dbReference type="Rhea" id="RHEA:49884"/>
        <dbReference type="Rhea" id="RHEA-COMP:11964"/>
        <dbReference type="Rhea" id="RHEA-COMP:11965"/>
        <dbReference type="ChEBI" id="CHEBI:15377"/>
        <dbReference type="ChEBI" id="CHEBI:15378"/>
        <dbReference type="ChEBI" id="CHEBI:15379"/>
        <dbReference type="ChEBI" id="CHEBI:32395"/>
        <dbReference type="ChEBI" id="CHEBI:57618"/>
        <dbReference type="ChEBI" id="CHEBI:58210"/>
        <dbReference type="ChEBI" id="CHEBI:131975"/>
    </reaction>
    <physiologicalReaction direction="left-to-right" evidence="2">
        <dbReference type="Rhea" id="RHEA:49885"/>
    </physiologicalReaction>
</comment>
<comment type="catalytic activity">
    <reaction evidence="2">
        <text>(5Z,8Z,11Z,14Z)-eicosatetraenoate + reduced [NADPH--hemoprotein reductase] + O2 = (11R,12S)-epoxy-(5Z,8Z,14Z)-eicosatrienoate + oxidized [NADPH--hemoprotein reductase] + H2O + H(+)</text>
        <dbReference type="Rhea" id="RHEA:49880"/>
        <dbReference type="Rhea" id="RHEA-COMP:11964"/>
        <dbReference type="Rhea" id="RHEA-COMP:11965"/>
        <dbReference type="ChEBI" id="CHEBI:15377"/>
        <dbReference type="ChEBI" id="CHEBI:15378"/>
        <dbReference type="ChEBI" id="CHEBI:15379"/>
        <dbReference type="ChEBI" id="CHEBI:32395"/>
        <dbReference type="ChEBI" id="CHEBI:57618"/>
        <dbReference type="ChEBI" id="CHEBI:58210"/>
        <dbReference type="ChEBI" id="CHEBI:131970"/>
    </reaction>
    <physiologicalReaction direction="left-to-right" evidence="2">
        <dbReference type="Rhea" id="RHEA:49881"/>
    </physiologicalReaction>
</comment>
<comment type="catalytic activity">
    <reaction evidence="2">
        <text>(5Z,8Z,11Z,14Z)-eicosatetraenoate + reduced [NADPH--hemoprotein reductase] + O2 = (11S,12R)-epoxy-(5Z,8Z,14Z)-eicosatrienoate + oxidized [NADPH--hemoprotein reductase] + H2O + H(+)</text>
        <dbReference type="Rhea" id="RHEA:49876"/>
        <dbReference type="Rhea" id="RHEA-COMP:11964"/>
        <dbReference type="Rhea" id="RHEA-COMP:11965"/>
        <dbReference type="ChEBI" id="CHEBI:15377"/>
        <dbReference type="ChEBI" id="CHEBI:15378"/>
        <dbReference type="ChEBI" id="CHEBI:15379"/>
        <dbReference type="ChEBI" id="CHEBI:32395"/>
        <dbReference type="ChEBI" id="CHEBI:57618"/>
        <dbReference type="ChEBI" id="CHEBI:58210"/>
        <dbReference type="ChEBI" id="CHEBI:131969"/>
    </reaction>
    <physiologicalReaction direction="left-to-right" evidence="2">
        <dbReference type="Rhea" id="RHEA:49877"/>
    </physiologicalReaction>
</comment>
<comment type="catalytic activity">
    <reaction evidence="2">
        <text>(5Z,8Z,11Z,14Z)-eicosatetraenoate + reduced [NADPH--hemoprotein reductase] + O2 = (14R,15S)-epoxy-(5Z,8Z,11Z)-eicosatrienoate + oxidized [NADPH--hemoprotein reductase] + H2O + H(+)</text>
        <dbReference type="Rhea" id="RHEA:49860"/>
        <dbReference type="Rhea" id="RHEA-COMP:11964"/>
        <dbReference type="Rhea" id="RHEA-COMP:11965"/>
        <dbReference type="ChEBI" id="CHEBI:15377"/>
        <dbReference type="ChEBI" id="CHEBI:15378"/>
        <dbReference type="ChEBI" id="CHEBI:15379"/>
        <dbReference type="ChEBI" id="CHEBI:32395"/>
        <dbReference type="ChEBI" id="CHEBI:57618"/>
        <dbReference type="ChEBI" id="CHEBI:58210"/>
        <dbReference type="ChEBI" id="CHEBI:131965"/>
    </reaction>
    <physiologicalReaction direction="left-to-right" evidence="2">
        <dbReference type="Rhea" id="RHEA:49861"/>
    </physiologicalReaction>
</comment>
<comment type="catalytic activity">
    <reaction evidence="2">
        <text>(5S)-hydroperoxy-(6E,8Z,11Z,14Z)-eicosatetraenoate = 5-oxo-(6E,8Z,11Z,14Z)-eicosatetraenoate + H2O</text>
        <dbReference type="Rhea" id="RHEA:48632"/>
        <dbReference type="ChEBI" id="CHEBI:15377"/>
        <dbReference type="ChEBI" id="CHEBI:57450"/>
        <dbReference type="ChEBI" id="CHEBI:65342"/>
    </reaction>
    <physiologicalReaction direction="left-to-right" evidence="2">
        <dbReference type="Rhea" id="RHEA:48633"/>
    </physiologicalReaction>
</comment>
<comment type="catalytic activity">
    <reaction evidence="2">
        <text>(12S)-hydroperoxy-(5Z,8Z,10E,14Z)-eicosatetraenoate = 12-oxo-(5Z,8Z,10E,14Z)-eicosatetraenoate + H2O</text>
        <dbReference type="Rhea" id="RHEA:37947"/>
        <dbReference type="ChEBI" id="CHEBI:15377"/>
        <dbReference type="ChEBI" id="CHEBI:57444"/>
        <dbReference type="ChEBI" id="CHEBI:75231"/>
        <dbReference type="EC" id="4.2.1.152"/>
    </reaction>
    <physiologicalReaction direction="left-to-right" evidence="2">
        <dbReference type="Rhea" id="RHEA:37948"/>
    </physiologicalReaction>
</comment>
<comment type="catalytic activity">
    <reaction evidence="2">
        <text>(13S)-hydroperoxy-(9Z,11E)-octadecadienoate = 13-oxo-(9Z,11E)-octadecadienoate + H2O</text>
        <dbReference type="Rhea" id="RHEA:48716"/>
        <dbReference type="ChEBI" id="CHEBI:15377"/>
        <dbReference type="ChEBI" id="CHEBI:57466"/>
        <dbReference type="ChEBI" id="CHEBI:90781"/>
    </reaction>
    <physiologicalReaction direction="left-to-right" evidence="2">
        <dbReference type="Rhea" id="RHEA:48717"/>
    </physiologicalReaction>
</comment>
<comment type="catalytic activity">
    <reaction evidence="2">
        <text>(15S)-hydroperoxy-(5Z,8Z,11Z,13E)-eicosatetraenoate = 15-oxo-(5Z,8Z,11Z,13E)-eicosatetraenoate + H2O</text>
        <dbReference type="Rhea" id="RHEA:48636"/>
        <dbReference type="ChEBI" id="CHEBI:15377"/>
        <dbReference type="ChEBI" id="CHEBI:57410"/>
        <dbReference type="ChEBI" id="CHEBI:57446"/>
    </reaction>
    <physiologicalReaction direction="left-to-right" evidence="2">
        <dbReference type="Rhea" id="RHEA:48637"/>
    </physiologicalReaction>
</comment>
<comment type="cofactor">
    <cofactor evidence="1">
        <name>heme</name>
        <dbReference type="ChEBI" id="CHEBI:30413"/>
    </cofactor>
</comment>
<comment type="activity regulation">
    <text evidence="2 8">Enzyme activity is increased by cytochrome b5 (PubMed:23821647). Enzyme activity is increased by liposomes containing anionic phospholipids, phosphatidic acid and cardiolipin. Inhibited by naringenin with an IC(50) of 5 uM (By similarity).</text>
</comment>
<comment type="biophysicochemical properties">
    <kinetics>
        <KM evidence="3">392.2 uM for all-trans-retinol</KM>
        <KM evidence="3">153.9 uM for all-trans-retinal</KM>
        <KM evidence="3">138.9 uM for 7,12-dimethyltetraphene</KM>
        <KM evidence="3">500 uM for arachidonic acid</KM>
        <text>kcat is 0.04 min(-1) for retinol, 0.08 min(-1) for retinal, 1.24 min(-1) for 7,12-dimethyltetraphene, 0.13 min(-1) for arachidonic acid.</text>
    </kinetics>
</comment>
<comment type="pathway">
    <text evidence="2">Steroid hormone biosynthesis.</text>
</comment>
<comment type="pathway">
    <text evidence="2">Cofactor metabolism; retinol metabolism.</text>
</comment>
<comment type="pathway">
    <text evidence="2">Lipid metabolism; arachidonate metabolism.</text>
</comment>
<comment type="subcellular location">
    <subcellularLocation>
        <location evidence="7">Endoplasmic reticulum membrane</location>
        <topology evidence="7">Peripheral membrane protein</topology>
    </subcellularLocation>
    <subcellularLocation>
        <location evidence="7">Microsome membrane</location>
        <topology evidence="7">Peripheral membrane protein</topology>
    </subcellularLocation>
    <subcellularLocation>
        <location evidence="7">Mitochondrion</location>
    </subcellularLocation>
    <text evidence="7">Located primarily in endoplasmic reticulum. Upon treatment with 2,3,7,8-tetrachlorodibenzo-p-dioxin (TCDD), CYP1B1 is also targeted to mitochondria.</text>
</comment>
<comment type="tissue specificity">
    <text evidence="4 6 9">Constitutively expressed in retinal and kidney pericytes cells (PubMed:23568032). Expressed in retinal endothelial cells (at protein level). Expressed in cardiac, pulmonary and aortic endothelial cells (PubMed:19005183). Constitutively expressed in trabecular meshwork of the eye (at protein level) (PubMed:23979599).</text>
</comment>
<comment type="induction">
    <text evidence="6 7">Up-regulated by polycyclic aromatic hydrocarbons (PAH) and 2,3,7,8-tetrachlorodibenzo-p-dioxin (TCDD).</text>
</comment>
<comment type="disruption phenotype">
    <text evidence="9">Severe ocular drainage structure abnormalities, significant elevated intraocular pressure.</text>
</comment>
<comment type="similarity">
    <text evidence="12">Belongs to the cytochrome P450 family.</text>
</comment>
<accession>Q64429</accession>
<accession>Q3UVA8</accession>
<accession>Q60593</accession>
<accession>Q64461</accession>
<evidence type="ECO:0000250" key="1"/>
<evidence type="ECO:0000250" key="2">
    <source>
        <dbReference type="UniProtKB" id="Q16678"/>
    </source>
</evidence>
<evidence type="ECO:0000269" key="3">
    <source>
    </source>
</evidence>
<evidence type="ECO:0000269" key="4">
    <source>
    </source>
</evidence>
<evidence type="ECO:0000269" key="5">
    <source>
    </source>
</evidence>
<evidence type="ECO:0000269" key="6">
    <source>
    </source>
</evidence>
<evidence type="ECO:0000269" key="7">
    <source>
    </source>
</evidence>
<evidence type="ECO:0000269" key="8">
    <source>
    </source>
</evidence>
<evidence type="ECO:0000269" key="9">
    <source>
    </source>
</evidence>
<evidence type="ECO:0000303" key="10">
    <source>
    </source>
</evidence>
<evidence type="ECO:0000303" key="11">
    <source>
    </source>
</evidence>
<evidence type="ECO:0000305" key="12"/>
<evidence type="ECO:0000305" key="13">
    <source>
    </source>
</evidence>
<evidence type="ECO:0000305" key="14">
    <source>
    </source>
</evidence>
<evidence type="ECO:0000312" key="15">
    <source>
        <dbReference type="MGI" id="MGI:88590"/>
    </source>
</evidence>
<gene>
    <name evidence="11 15" type="primary">Cyp1b1</name>
    <name type="synonym">Cyp1-b1</name>
</gene>
<feature type="chain" id="PRO_0000051661" description="Cytochrome P450 1B1">
    <location>
        <begin position="1"/>
        <end position="543"/>
    </location>
</feature>
<feature type="binding site" description="axial binding residue" evidence="1">
    <location>
        <position position="470"/>
    </location>
    <ligand>
        <name>heme</name>
        <dbReference type="ChEBI" id="CHEBI:30413"/>
    </ligand>
    <ligandPart>
        <name>Fe</name>
        <dbReference type="ChEBI" id="CHEBI:18248"/>
    </ligandPart>
</feature>
<feature type="sequence conflict" description="In Ref. 2; CAA55205." evidence="12" ref="2">
    <original>Q</original>
    <variation>P</variation>
    <location>
        <position position="195"/>
    </location>
</feature>
<feature type="sequence conflict" description="In Ref. 2; CAA55205." evidence="12" ref="2">
    <original>A</original>
    <variation>D</variation>
    <location>
        <position position="307"/>
    </location>
</feature>
<feature type="sequence conflict" description="In Ref. 2; CAA55205." evidence="12" ref="2">
    <original>F</original>
    <variation>G</variation>
    <location>
        <position position="328"/>
    </location>
</feature>
<feature type="sequence conflict" description="In Ref. 2; CAA55205." evidence="12" ref="2">
    <original>A</original>
    <variation>T</variation>
    <location>
        <position position="457"/>
    </location>
</feature>
<feature type="sequence conflict" description="In Ref. 2; CAA55205." evidence="12" ref="2">
    <original>F</original>
    <variation>V</variation>
    <location>
        <position position="516"/>
    </location>
</feature>
<protein>
    <recommendedName>
        <fullName evidence="10">Cytochrome P450 1B1</fullName>
        <ecNumber evidence="8">1.14.14.1</ecNumber>
    </recommendedName>
    <alternativeName>
        <fullName>CYPIB1</fullName>
    </alternativeName>
    <alternativeName>
        <fullName>Cytochrome P450CMEF</fullName>
        <shortName>Cytochrome P450EF</shortName>
    </alternativeName>
    <alternativeName>
        <fullName>Hydroperoxy icosatetraenoate dehydratase</fullName>
        <ecNumber evidence="2">4.2.1.152</ecNumber>
    </alternativeName>
</protein>
<sequence>MATSLSADSPQQLSSLSTQQTTLLLLFSVLAAVHLGQWLLRQWQRKPWSSPPGPFPWPLIGNAAAVGQASHLYFARLARRYGDVFQIRLGSCPVVVLNGESAIHQALVQQGSIFADRPPFASFRVVSGGRSLAFGHYSEHWKTQRRSAYSTMRAFSTRHPRSRGLLEGHALAEARELVAVLVRRCAGGAFLDPTQPVIVAVANVMSAVCFGCRYNHDDAEFLELLSHNEEFGRTVGAGSLVDVLPWLQLFPNPVRTTFRKFEQLNRNFSNFVLDKFLRHRESLVPGAAPRDMTDAFILSAEKKASGAPGDDSSGLDLEDVPATITDIFGASQDTLSTALLWLLILFTRYPDVQARVQAELDQVVGRDRLPCMSDQPNLPYVMAFLYESMRFSSFLPVTIPHATTANTFVLGYYIPKNTVVFVNQWSVNHDPAKWPNPEDFDPARFLDKDGFINKALASSVMIFSVGKRRCIGEELSKMLLFLFISILAHQCNFKANQNESSNMSFSYGLTIKPKSFRIHVSLRESMELLDNAVKKLQTEEGCK</sequence>
<reference key="1">
    <citation type="journal article" date="1994" name="DNA Cell Biol.">
        <title>cDNA cloning, sequence analysis, and induction by aryl hydrocarbons of a murine cytochrome P450 gene, Cyp1b1.</title>
        <authorList>
            <person name="Shen Z."/>
            <person name="Liu J."/>
            <person name="Wells R.L."/>
            <person name="Elkind M.M."/>
        </authorList>
    </citation>
    <scope>NUCLEOTIDE SEQUENCE [MRNA]</scope>
    <source>
        <strain>C3H/HeJ</strain>
    </source>
</reference>
<reference key="2">
    <citation type="journal article" date="1994" name="J. Biol. Chem.">
        <title>Mouse cytochrome P-450EF, representative of a new 1B subfamily of cytochrome P-450s. Cloning, sequence determination, and tissue expression.</title>
        <authorList>
            <person name="Savas U."/>
            <person name="Bhattacharyya K.K."/>
            <person name="Christou M."/>
            <person name="Alexander D.L."/>
            <person name="Jefcoate C.R."/>
        </authorList>
    </citation>
    <scope>NUCLEOTIDE SEQUENCE [MRNA]</scope>
    <source>
        <strain>C3H/HeJ</strain>
    </source>
</reference>
<reference key="3">
    <citation type="journal article" date="2005" name="Science">
        <title>The transcriptional landscape of the mammalian genome.</title>
        <authorList>
            <person name="Carninci P."/>
            <person name="Kasukawa T."/>
            <person name="Katayama S."/>
            <person name="Gough J."/>
            <person name="Frith M.C."/>
            <person name="Maeda N."/>
            <person name="Oyama R."/>
            <person name="Ravasi T."/>
            <person name="Lenhard B."/>
            <person name="Wells C."/>
            <person name="Kodzius R."/>
            <person name="Shimokawa K."/>
            <person name="Bajic V.B."/>
            <person name="Brenner S.E."/>
            <person name="Batalov S."/>
            <person name="Forrest A.R."/>
            <person name="Zavolan M."/>
            <person name="Davis M.J."/>
            <person name="Wilming L.G."/>
            <person name="Aidinis V."/>
            <person name="Allen J.E."/>
            <person name="Ambesi-Impiombato A."/>
            <person name="Apweiler R."/>
            <person name="Aturaliya R.N."/>
            <person name="Bailey T.L."/>
            <person name="Bansal M."/>
            <person name="Baxter L."/>
            <person name="Beisel K.W."/>
            <person name="Bersano T."/>
            <person name="Bono H."/>
            <person name="Chalk A.M."/>
            <person name="Chiu K.P."/>
            <person name="Choudhary V."/>
            <person name="Christoffels A."/>
            <person name="Clutterbuck D.R."/>
            <person name="Crowe M.L."/>
            <person name="Dalla E."/>
            <person name="Dalrymple B.P."/>
            <person name="de Bono B."/>
            <person name="Della Gatta G."/>
            <person name="di Bernardo D."/>
            <person name="Down T."/>
            <person name="Engstrom P."/>
            <person name="Fagiolini M."/>
            <person name="Faulkner G."/>
            <person name="Fletcher C.F."/>
            <person name="Fukushima T."/>
            <person name="Furuno M."/>
            <person name="Futaki S."/>
            <person name="Gariboldi M."/>
            <person name="Georgii-Hemming P."/>
            <person name="Gingeras T.R."/>
            <person name="Gojobori T."/>
            <person name="Green R.E."/>
            <person name="Gustincich S."/>
            <person name="Harbers M."/>
            <person name="Hayashi Y."/>
            <person name="Hensch T.K."/>
            <person name="Hirokawa N."/>
            <person name="Hill D."/>
            <person name="Huminiecki L."/>
            <person name="Iacono M."/>
            <person name="Ikeo K."/>
            <person name="Iwama A."/>
            <person name="Ishikawa T."/>
            <person name="Jakt M."/>
            <person name="Kanapin A."/>
            <person name="Katoh M."/>
            <person name="Kawasawa Y."/>
            <person name="Kelso J."/>
            <person name="Kitamura H."/>
            <person name="Kitano H."/>
            <person name="Kollias G."/>
            <person name="Krishnan S.P."/>
            <person name="Kruger A."/>
            <person name="Kummerfeld S.K."/>
            <person name="Kurochkin I.V."/>
            <person name="Lareau L.F."/>
            <person name="Lazarevic D."/>
            <person name="Lipovich L."/>
            <person name="Liu J."/>
            <person name="Liuni S."/>
            <person name="McWilliam S."/>
            <person name="Madan Babu M."/>
            <person name="Madera M."/>
            <person name="Marchionni L."/>
            <person name="Matsuda H."/>
            <person name="Matsuzawa S."/>
            <person name="Miki H."/>
            <person name="Mignone F."/>
            <person name="Miyake S."/>
            <person name="Morris K."/>
            <person name="Mottagui-Tabar S."/>
            <person name="Mulder N."/>
            <person name="Nakano N."/>
            <person name="Nakauchi H."/>
            <person name="Ng P."/>
            <person name="Nilsson R."/>
            <person name="Nishiguchi S."/>
            <person name="Nishikawa S."/>
            <person name="Nori F."/>
            <person name="Ohara O."/>
            <person name="Okazaki Y."/>
            <person name="Orlando V."/>
            <person name="Pang K.C."/>
            <person name="Pavan W.J."/>
            <person name="Pavesi G."/>
            <person name="Pesole G."/>
            <person name="Petrovsky N."/>
            <person name="Piazza S."/>
            <person name="Reed J."/>
            <person name="Reid J.F."/>
            <person name="Ring B.Z."/>
            <person name="Ringwald M."/>
            <person name="Rost B."/>
            <person name="Ruan Y."/>
            <person name="Salzberg S.L."/>
            <person name="Sandelin A."/>
            <person name="Schneider C."/>
            <person name="Schoenbach C."/>
            <person name="Sekiguchi K."/>
            <person name="Semple C.A."/>
            <person name="Seno S."/>
            <person name="Sessa L."/>
            <person name="Sheng Y."/>
            <person name="Shibata Y."/>
            <person name="Shimada H."/>
            <person name="Shimada K."/>
            <person name="Silva D."/>
            <person name="Sinclair B."/>
            <person name="Sperling S."/>
            <person name="Stupka E."/>
            <person name="Sugiura K."/>
            <person name="Sultana R."/>
            <person name="Takenaka Y."/>
            <person name="Taki K."/>
            <person name="Tammoja K."/>
            <person name="Tan S.L."/>
            <person name="Tang S."/>
            <person name="Taylor M.S."/>
            <person name="Tegner J."/>
            <person name="Teichmann S.A."/>
            <person name="Ueda H.R."/>
            <person name="van Nimwegen E."/>
            <person name="Verardo R."/>
            <person name="Wei C.L."/>
            <person name="Yagi K."/>
            <person name="Yamanishi H."/>
            <person name="Zabarovsky E."/>
            <person name="Zhu S."/>
            <person name="Zimmer A."/>
            <person name="Hide W."/>
            <person name="Bult C."/>
            <person name="Grimmond S.M."/>
            <person name="Teasdale R.D."/>
            <person name="Liu E.T."/>
            <person name="Brusic V."/>
            <person name="Quackenbush J."/>
            <person name="Wahlestedt C."/>
            <person name="Mattick J.S."/>
            <person name="Hume D.A."/>
            <person name="Kai C."/>
            <person name="Sasaki D."/>
            <person name="Tomaru Y."/>
            <person name="Fukuda S."/>
            <person name="Kanamori-Katayama M."/>
            <person name="Suzuki M."/>
            <person name="Aoki J."/>
            <person name="Arakawa T."/>
            <person name="Iida J."/>
            <person name="Imamura K."/>
            <person name="Itoh M."/>
            <person name="Kato T."/>
            <person name="Kawaji H."/>
            <person name="Kawagashira N."/>
            <person name="Kawashima T."/>
            <person name="Kojima M."/>
            <person name="Kondo S."/>
            <person name="Konno H."/>
            <person name="Nakano K."/>
            <person name="Ninomiya N."/>
            <person name="Nishio T."/>
            <person name="Okada M."/>
            <person name="Plessy C."/>
            <person name="Shibata K."/>
            <person name="Shiraki T."/>
            <person name="Suzuki S."/>
            <person name="Tagami M."/>
            <person name="Waki K."/>
            <person name="Watahiki A."/>
            <person name="Okamura-Oho Y."/>
            <person name="Suzuki H."/>
            <person name="Kawai J."/>
            <person name="Hayashizaki Y."/>
        </authorList>
    </citation>
    <scope>NUCLEOTIDE SEQUENCE [LARGE SCALE MRNA]</scope>
    <source>
        <strain>C57BL/6J</strain>
        <tissue>Bone</tissue>
    </source>
</reference>
<reference key="4">
    <citation type="submission" date="2005-07" db="EMBL/GenBank/DDBJ databases">
        <authorList>
            <person name="Mural R.J."/>
            <person name="Adams M.D."/>
            <person name="Myers E.W."/>
            <person name="Smith H.O."/>
            <person name="Venter J.C."/>
        </authorList>
    </citation>
    <scope>NUCLEOTIDE SEQUENCE [LARGE SCALE GENOMIC DNA]</scope>
</reference>
<reference key="5">
    <citation type="journal article" date="1993" name="Proc. Natl. Acad. Sci. U.S.A.">
        <title>Identification of a cytochrome P450 gene by reverse transcription-PCR using degenerate primers containing inosine.</title>
        <authorList>
            <person name="Shen Z."/>
            <person name="Wells R.L."/>
            <person name="Liu J."/>
            <person name="Elkind M.M."/>
        </authorList>
    </citation>
    <scope>NUCLEOTIDE SEQUENCE [MRNA] OF 361-466</scope>
</reference>
<reference key="6">
    <citation type="journal article" date="2004" name="Drug Metab. Dispos.">
        <title>Metabolism of retinoids and arachidonic acid by human and mouse cytochrome P450 1b1.</title>
        <authorList>
            <person name="Choudhary D."/>
            <person name="Jansson I."/>
            <person name="Stoilov I."/>
            <person name="Sarfarazi M."/>
            <person name="Schenkman J.B."/>
        </authorList>
    </citation>
    <scope>FUNCTION</scope>
    <scope>CATALYTIC ACTIVITY</scope>
    <scope>BIOPHYSICOCHEMICAL PROPERTIES</scope>
</reference>
<reference key="7">
    <citation type="journal article" date="2009" name="Blood">
        <title>CYP1B1 expression promotes the proangiogenic phenotype of endothelium through decreased intracellular oxidative stress and thrombospondin-2 expression.</title>
        <authorList>
            <person name="Tang Y."/>
            <person name="Scheef E.A."/>
            <person name="Wang S."/>
            <person name="Sorenson C.M."/>
            <person name="Marcus C.B."/>
            <person name="Jefcoate C.R."/>
            <person name="Sheibani N."/>
        </authorList>
    </citation>
    <scope>FUNCTION IN VASCULAR DEVELOPMENT AND ANGIOGENESIS</scope>
    <scope>TISSUE SPECIFICITY</scope>
</reference>
<reference key="8">
    <citation type="journal article" date="2010" name="Am. J. Physiol.">
        <title>CYP1B1 and endothelial nitric oxide synthase combine to sustain proangiogenic functions of endothelial cells under hyperoxic stress.</title>
        <authorList>
            <person name="Tang Y."/>
            <person name="Scheef E.A."/>
            <person name="Gurel Z."/>
            <person name="Sorenson C.M."/>
            <person name="Jefcoate C.R."/>
            <person name="Sheibani N."/>
        </authorList>
    </citation>
    <scope>FUNCTION IN ANGIOGENESIS</scope>
    <scope>TISSUE SPECIFICITY</scope>
</reference>
<reference key="9">
    <citation type="journal article" date="2010" name="Cell">
        <title>A tissue-specific atlas of mouse protein phosphorylation and expression.</title>
        <authorList>
            <person name="Huttlin E.L."/>
            <person name="Jedrychowski M.P."/>
            <person name="Elias J.E."/>
            <person name="Goswami T."/>
            <person name="Rad R."/>
            <person name="Beausoleil S.A."/>
            <person name="Villen J."/>
            <person name="Haas W."/>
            <person name="Sowa M.E."/>
            <person name="Gygi S.P."/>
        </authorList>
    </citation>
    <scope>IDENTIFICATION BY MASS SPECTROMETRY [LARGE SCALE ANALYSIS]</scope>
    <source>
        <tissue>Spleen</tissue>
    </source>
</reference>
<reference key="10">
    <citation type="journal article" date="2013" name="Biochem. Biophys. Res. Commun.">
        <title>Mitochondrial targeting of mouse NQO1 and CYP1B1 proteins.</title>
        <authorList>
            <person name="Dong H."/>
            <person name="Shertzer H.G."/>
            <person name="Genter M.B."/>
            <person name="Gonzalez F.J."/>
            <person name="Vasiliou V."/>
            <person name="Jefcoate C."/>
            <person name="Nebert D.W."/>
        </authorList>
    </citation>
    <scope>SUBCELLULAR LOCATION</scope>
</reference>
<reference key="11">
    <citation type="journal article" date="2013" name="Lab. Invest.">
        <title>Lack of Cyp1b1 promotes the proliferative and migratory phenotype of perivascular supporting cells.</title>
        <authorList>
            <person name="Palenski T.L."/>
            <person name="Sorenson C.M."/>
            <person name="Jefcoate C.R."/>
            <person name="Sheibani N."/>
        </authorList>
    </citation>
    <scope>FUNCTION IN VASCULAR HOMEOSTASIS</scope>
    <scope>TISSUE SPECIFICITY</scope>
    <scope>INDUCTION</scope>
</reference>
<reference key="12">
    <citation type="journal article" date="2013" name="Mol. Cell. Biol.">
        <title>Cyp1b1 mediates periostin regulation of trabecular meshwork development by suppression of oxidative stress.</title>
        <authorList>
            <person name="Zhao Y."/>
            <person name="Wang S."/>
            <person name="Sorenson C.M."/>
            <person name="Teixeira L."/>
            <person name="Dubielzig R.R."/>
            <person name="Peters D.M."/>
            <person name="Conway S.J."/>
            <person name="Jefcoate C.R."/>
            <person name="Sheibani N."/>
        </authorList>
    </citation>
    <scope>FUNCTION IN TRABECULAR MESHWORK DEVELOPMENT</scope>
    <scope>DISRUPTION PHENOTYPE</scope>
    <scope>TISSUE SPECIFICITY</scope>
</reference>
<reference key="13">
    <citation type="journal article" date="2013" name="Mol. Pharmacol.">
        <title>Specificity determinants of CYP1B1 estradiol hydroxylation.</title>
        <authorList>
            <person name="Nishida C.R."/>
            <person name="Everett S."/>
            <person name="Ortiz de Montellano P.R."/>
        </authorList>
    </citation>
    <scope>FUNCTION IN ESTROGEN METABOLISM</scope>
    <scope>CATALYTIC ACTIVITY</scope>
    <scope>ACTIVITY REGULATION</scope>
</reference>
<proteinExistence type="evidence at protein level"/>
<dbReference type="EC" id="1.14.14.1" evidence="8"/>
<dbReference type="EC" id="4.2.1.152" evidence="2"/>
<dbReference type="EMBL" id="U03283">
    <property type="protein sequence ID" value="AAC52141.1"/>
    <property type="molecule type" value="mRNA"/>
</dbReference>
<dbReference type="EMBL" id="X78445">
    <property type="protein sequence ID" value="CAA55205.1"/>
    <property type="molecule type" value="mRNA"/>
</dbReference>
<dbReference type="EMBL" id="AK137461">
    <property type="protein sequence ID" value="BAE23362.1"/>
    <property type="molecule type" value="mRNA"/>
</dbReference>
<dbReference type="EMBL" id="CH466537">
    <property type="protein sequence ID" value="EDL38490.1"/>
    <property type="molecule type" value="Genomic_DNA"/>
</dbReference>
<dbReference type="EMBL" id="U02479">
    <property type="protein sequence ID" value="AAC52131.1"/>
    <property type="molecule type" value="mRNA"/>
</dbReference>
<dbReference type="CCDS" id="CCDS28986.1"/>
<dbReference type="PIR" id="A53790">
    <property type="entry name" value="A53790"/>
</dbReference>
<dbReference type="RefSeq" id="NP_034124.1">
    <property type="nucleotide sequence ID" value="NM_009994.2"/>
</dbReference>
<dbReference type="SMR" id="Q64429"/>
<dbReference type="BioGRID" id="199003">
    <property type="interactions" value="3"/>
</dbReference>
<dbReference type="FunCoup" id="Q64429">
    <property type="interactions" value="1822"/>
</dbReference>
<dbReference type="STRING" id="10090.ENSMUSP00000024894"/>
<dbReference type="iPTMnet" id="Q64429"/>
<dbReference type="PhosphoSitePlus" id="Q64429"/>
<dbReference type="jPOST" id="Q64429"/>
<dbReference type="PaxDb" id="10090-ENSMUSP00000024894"/>
<dbReference type="ProteomicsDB" id="284107"/>
<dbReference type="Pumba" id="Q64429"/>
<dbReference type="Antibodypedia" id="29477">
    <property type="antibodies" value="444 antibodies from 36 providers"/>
</dbReference>
<dbReference type="DNASU" id="13078"/>
<dbReference type="Ensembl" id="ENSMUST00000024894.2">
    <property type="protein sequence ID" value="ENSMUSP00000024894.2"/>
    <property type="gene ID" value="ENSMUSG00000024087.5"/>
</dbReference>
<dbReference type="GeneID" id="13078"/>
<dbReference type="KEGG" id="mmu:13078"/>
<dbReference type="UCSC" id="uc008dqc.1">
    <property type="organism name" value="mouse"/>
</dbReference>
<dbReference type="AGR" id="MGI:88590"/>
<dbReference type="CTD" id="1545"/>
<dbReference type="MGI" id="MGI:88590">
    <property type="gene designation" value="Cyp1b1"/>
</dbReference>
<dbReference type="VEuPathDB" id="HostDB:ENSMUSG00000024087"/>
<dbReference type="eggNOG" id="KOG0156">
    <property type="taxonomic scope" value="Eukaryota"/>
</dbReference>
<dbReference type="GeneTree" id="ENSGT00950000183037"/>
<dbReference type="HOGENOM" id="CLU_001570_22_0_1"/>
<dbReference type="InParanoid" id="Q64429"/>
<dbReference type="OMA" id="QIRLGNC"/>
<dbReference type="OrthoDB" id="1055148at2759"/>
<dbReference type="PhylomeDB" id="Q64429"/>
<dbReference type="TreeFam" id="TF105095"/>
<dbReference type="Reactome" id="R-MMU-211976">
    <property type="pathway name" value="Endogenous sterols"/>
</dbReference>
<dbReference type="Reactome" id="R-MMU-2142670">
    <property type="pathway name" value="Synthesis of epoxy (EET) and dihydroxyeicosatrienoic acids (DHET)"/>
</dbReference>
<dbReference type="Reactome" id="R-MMU-2142816">
    <property type="pathway name" value="Synthesis of (16-20)-hydroxyeicosatetraenoic acids (HETE)"/>
</dbReference>
<dbReference type="SABIO-RK" id="Q64429"/>
<dbReference type="UniPathway" id="UPA00383"/>
<dbReference type="UniPathway" id="UPA00912"/>
<dbReference type="BioGRID-ORCS" id="13078">
    <property type="hits" value="5 hits in 80 CRISPR screens"/>
</dbReference>
<dbReference type="ChiTaRS" id="Cyp1b1">
    <property type="organism name" value="mouse"/>
</dbReference>
<dbReference type="PRO" id="PR:Q64429"/>
<dbReference type="Proteomes" id="UP000000589">
    <property type="component" value="Chromosome 17"/>
</dbReference>
<dbReference type="RNAct" id="Q64429">
    <property type="molecule type" value="protein"/>
</dbReference>
<dbReference type="Bgee" id="ENSMUSG00000024087">
    <property type="expression patterns" value="Expressed in stroma of bone marrow and 191 other cell types or tissues"/>
</dbReference>
<dbReference type="ExpressionAtlas" id="Q64429">
    <property type="expression patterns" value="baseline and differential"/>
</dbReference>
<dbReference type="GO" id="GO:0005789">
    <property type="term" value="C:endoplasmic reticulum membrane"/>
    <property type="evidence" value="ECO:0007669"/>
    <property type="project" value="UniProtKB-SubCell"/>
</dbReference>
<dbReference type="GO" id="GO:0005739">
    <property type="term" value="C:mitochondrion"/>
    <property type="evidence" value="ECO:0000315"/>
    <property type="project" value="UniProtKB"/>
</dbReference>
<dbReference type="GO" id="GO:0101020">
    <property type="term" value="F:estrogen 16-alpha-hydroxylase activity"/>
    <property type="evidence" value="ECO:0000250"/>
    <property type="project" value="UniProtKB"/>
</dbReference>
<dbReference type="GO" id="GO:0101021">
    <property type="term" value="F:estrogen 2-hydroxylase activity"/>
    <property type="evidence" value="ECO:0007669"/>
    <property type="project" value="RHEA"/>
</dbReference>
<dbReference type="GO" id="GO:0020037">
    <property type="term" value="F:heme binding"/>
    <property type="evidence" value="ECO:0000250"/>
    <property type="project" value="UniProtKB"/>
</dbReference>
<dbReference type="GO" id="GO:0106256">
    <property type="term" value="F:hydroperoxy icosatetraenoate dehydratase activity"/>
    <property type="evidence" value="ECO:0007669"/>
    <property type="project" value="UniProtKB-EC"/>
</dbReference>
<dbReference type="GO" id="GO:0005506">
    <property type="term" value="F:iron ion binding"/>
    <property type="evidence" value="ECO:0007669"/>
    <property type="project" value="InterPro"/>
</dbReference>
<dbReference type="GO" id="GO:0004497">
    <property type="term" value="F:monooxygenase activity"/>
    <property type="evidence" value="ECO:0000314"/>
    <property type="project" value="UniProtKB"/>
</dbReference>
<dbReference type="GO" id="GO:0016712">
    <property type="term" value="F:oxidoreductase activity, acting on paired donors, with incorporation or reduction of molecular oxygen, reduced flavin or flavoprotein as one donor, and incorporation of one atom of oxygen"/>
    <property type="evidence" value="ECO:0000314"/>
    <property type="project" value="MGI"/>
</dbReference>
<dbReference type="GO" id="GO:0050649">
    <property type="term" value="F:testosterone 6-beta-hydroxylase activity"/>
    <property type="evidence" value="ECO:0007669"/>
    <property type="project" value="RHEA"/>
</dbReference>
<dbReference type="GO" id="GO:0001525">
    <property type="term" value="P:angiogenesis"/>
    <property type="evidence" value="ECO:0000315"/>
    <property type="project" value="MGI"/>
</dbReference>
<dbReference type="GO" id="GO:0019369">
    <property type="term" value="P:arachidonate metabolic process"/>
    <property type="evidence" value="ECO:0000314"/>
    <property type="project" value="UniProtKB"/>
</dbReference>
<dbReference type="GO" id="GO:0042537">
    <property type="term" value="P:benzene-containing compound metabolic process"/>
    <property type="evidence" value="ECO:0000314"/>
    <property type="project" value="MGI"/>
</dbReference>
<dbReference type="GO" id="GO:0043534">
    <property type="term" value="P:blood vessel endothelial cell migration"/>
    <property type="evidence" value="ECO:0000315"/>
    <property type="project" value="MGI"/>
</dbReference>
<dbReference type="GO" id="GO:0048514">
    <property type="term" value="P:blood vessel morphogenesis"/>
    <property type="evidence" value="ECO:0000315"/>
    <property type="project" value="UniProtKB"/>
</dbReference>
<dbReference type="GO" id="GO:0007155">
    <property type="term" value="P:cell adhesion"/>
    <property type="evidence" value="ECO:0000315"/>
    <property type="project" value="UniProtKB"/>
</dbReference>
<dbReference type="GO" id="GO:0070301">
    <property type="term" value="P:cellular response to hydrogen peroxide"/>
    <property type="evidence" value="ECO:0000315"/>
    <property type="project" value="UniProtKB"/>
</dbReference>
<dbReference type="GO" id="GO:0030199">
    <property type="term" value="P:collagen fibril organization"/>
    <property type="evidence" value="ECO:0000315"/>
    <property type="project" value="UniProtKB"/>
</dbReference>
<dbReference type="GO" id="GO:0043542">
    <property type="term" value="P:endothelial cell migration"/>
    <property type="evidence" value="ECO:0000315"/>
    <property type="project" value="UniProtKB"/>
</dbReference>
<dbReference type="GO" id="GO:0071603">
    <property type="term" value="P:endothelial cell-cell adhesion"/>
    <property type="evidence" value="ECO:0000315"/>
    <property type="project" value="MGI"/>
</dbReference>
<dbReference type="GO" id="GO:0008210">
    <property type="term" value="P:estrogen metabolic process"/>
    <property type="evidence" value="ECO:0000314"/>
    <property type="project" value="UniProtKB"/>
</dbReference>
<dbReference type="GO" id="GO:0008631">
    <property type="term" value="P:intrinsic apoptotic signaling pathway in response to oxidative stress"/>
    <property type="evidence" value="ECO:0000315"/>
    <property type="project" value="UniProtKB"/>
</dbReference>
<dbReference type="GO" id="GO:0046466">
    <property type="term" value="P:membrane lipid catabolic process"/>
    <property type="evidence" value="ECO:0000315"/>
    <property type="project" value="UniProtKB"/>
</dbReference>
<dbReference type="GO" id="GO:0033629">
    <property type="term" value="P:negative regulation of cell adhesion mediated by integrin"/>
    <property type="evidence" value="ECO:0000315"/>
    <property type="project" value="UniProtKB"/>
</dbReference>
<dbReference type="GO" id="GO:0030336">
    <property type="term" value="P:negative regulation of cell migration"/>
    <property type="evidence" value="ECO:0000315"/>
    <property type="project" value="UniProtKB"/>
</dbReference>
<dbReference type="GO" id="GO:0008285">
    <property type="term" value="P:negative regulation of cell population proliferation"/>
    <property type="evidence" value="ECO:0000315"/>
    <property type="project" value="UniProtKB"/>
</dbReference>
<dbReference type="GO" id="GO:0032088">
    <property type="term" value="P:negative regulation of NF-kappaB transcription factor activity"/>
    <property type="evidence" value="ECO:0000315"/>
    <property type="project" value="UniProtKB"/>
</dbReference>
<dbReference type="GO" id="GO:0006809">
    <property type="term" value="P:nitric oxide biosynthetic process"/>
    <property type="evidence" value="ECO:0000315"/>
    <property type="project" value="UniProtKB"/>
</dbReference>
<dbReference type="GO" id="GO:0045766">
    <property type="term" value="P:positive regulation of angiogenesis"/>
    <property type="evidence" value="ECO:0000315"/>
    <property type="project" value="UniProtKB"/>
</dbReference>
<dbReference type="GO" id="GO:0043065">
    <property type="term" value="P:positive regulation of apoptotic process"/>
    <property type="evidence" value="ECO:0000315"/>
    <property type="project" value="UniProtKB"/>
</dbReference>
<dbReference type="GO" id="GO:0046427">
    <property type="term" value="P:positive regulation of receptor signaling pathway via JAK-STAT"/>
    <property type="evidence" value="ECO:0000315"/>
    <property type="project" value="UniProtKB"/>
</dbReference>
<dbReference type="GO" id="GO:0010575">
    <property type="term" value="P:positive regulation of vascular endothelial growth factor production"/>
    <property type="evidence" value="ECO:0000315"/>
    <property type="project" value="UniProtKB"/>
</dbReference>
<dbReference type="GO" id="GO:2000377">
    <property type="term" value="P:regulation of reactive oxygen species metabolic process"/>
    <property type="evidence" value="ECO:0000315"/>
    <property type="project" value="UniProtKB"/>
</dbReference>
<dbReference type="GO" id="GO:0009636">
    <property type="term" value="P:response to toxic substance"/>
    <property type="evidence" value="ECO:0000315"/>
    <property type="project" value="MGI"/>
</dbReference>
<dbReference type="GO" id="GO:0061298">
    <property type="term" value="P:retina vasculature development in camera-type eye"/>
    <property type="evidence" value="ECO:0000315"/>
    <property type="project" value="MGI"/>
</dbReference>
<dbReference type="GO" id="GO:0061304">
    <property type="term" value="P:retinal blood vessel morphogenesis"/>
    <property type="evidence" value="ECO:0000315"/>
    <property type="project" value="UniProtKB"/>
</dbReference>
<dbReference type="GO" id="GO:0042574">
    <property type="term" value="P:retinal metabolic process"/>
    <property type="evidence" value="ECO:0000314"/>
    <property type="project" value="UniProtKB"/>
</dbReference>
<dbReference type="GO" id="GO:0042572">
    <property type="term" value="P:retinol metabolic process"/>
    <property type="evidence" value="ECO:0000314"/>
    <property type="project" value="UniProtKB"/>
</dbReference>
<dbReference type="GO" id="GO:0008202">
    <property type="term" value="P:steroid metabolic process"/>
    <property type="evidence" value="ECO:0000250"/>
    <property type="project" value="UniProtKB"/>
</dbReference>
<dbReference type="GO" id="GO:0009404">
    <property type="term" value="P:toxin metabolic process"/>
    <property type="evidence" value="ECO:0000315"/>
    <property type="project" value="MGI"/>
</dbReference>
<dbReference type="GO" id="GO:0002930">
    <property type="term" value="P:trabecular meshwork development"/>
    <property type="evidence" value="ECO:0000315"/>
    <property type="project" value="UniProtKB"/>
</dbReference>
<dbReference type="GO" id="GO:0006805">
    <property type="term" value="P:xenobiotic metabolic process"/>
    <property type="evidence" value="ECO:0000250"/>
    <property type="project" value="UniProtKB"/>
</dbReference>
<dbReference type="CDD" id="cd20675">
    <property type="entry name" value="CYP1B1-like"/>
    <property type="match status" value="1"/>
</dbReference>
<dbReference type="FunFam" id="1.10.630.10:FF:000002">
    <property type="entry name" value="Cytochrome P450 1A1"/>
    <property type="match status" value="1"/>
</dbReference>
<dbReference type="Gene3D" id="1.10.630.10">
    <property type="entry name" value="Cytochrome P450"/>
    <property type="match status" value="1"/>
</dbReference>
<dbReference type="InterPro" id="IPR001128">
    <property type="entry name" value="Cyt_P450"/>
</dbReference>
<dbReference type="InterPro" id="IPR017972">
    <property type="entry name" value="Cyt_P450_CS"/>
</dbReference>
<dbReference type="InterPro" id="IPR002401">
    <property type="entry name" value="Cyt_P450_E_grp-I"/>
</dbReference>
<dbReference type="InterPro" id="IPR036396">
    <property type="entry name" value="Cyt_P450_sf"/>
</dbReference>
<dbReference type="PANTHER" id="PTHR24289:SF16">
    <property type="entry name" value="CYTOCHROME P450 1B1"/>
    <property type="match status" value="1"/>
</dbReference>
<dbReference type="PANTHER" id="PTHR24289">
    <property type="entry name" value="STEROID 17-ALPHA-HYDROXYLASE/17,20 LYASE"/>
    <property type="match status" value="1"/>
</dbReference>
<dbReference type="Pfam" id="PF00067">
    <property type="entry name" value="p450"/>
    <property type="match status" value="1"/>
</dbReference>
<dbReference type="PRINTS" id="PR00463">
    <property type="entry name" value="EP450I"/>
</dbReference>
<dbReference type="PRINTS" id="PR00385">
    <property type="entry name" value="P450"/>
</dbReference>
<dbReference type="SUPFAM" id="SSF48264">
    <property type="entry name" value="Cytochrome P450"/>
    <property type="match status" value="1"/>
</dbReference>
<dbReference type="PROSITE" id="PS00086">
    <property type="entry name" value="CYTOCHROME_P450"/>
    <property type="match status" value="1"/>
</dbReference>
<name>CP1B1_MOUSE</name>
<organism>
    <name type="scientific">Mus musculus</name>
    <name type="common">Mouse</name>
    <dbReference type="NCBI Taxonomy" id="10090"/>
    <lineage>
        <taxon>Eukaryota</taxon>
        <taxon>Metazoa</taxon>
        <taxon>Chordata</taxon>
        <taxon>Craniata</taxon>
        <taxon>Vertebrata</taxon>
        <taxon>Euteleostomi</taxon>
        <taxon>Mammalia</taxon>
        <taxon>Eutheria</taxon>
        <taxon>Euarchontoglires</taxon>
        <taxon>Glires</taxon>
        <taxon>Rodentia</taxon>
        <taxon>Myomorpha</taxon>
        <taxon>Muroidea</taxon>
        <taxon>Muridae</taxon>
        <taxon>Murinae</taxon>
        <taxon>Mus</taxon>
        <taxon>Mus</taxon>
    </lineage>
</organism>